<organism>
    <name type="scientific">Escherichia coli (strain 55989 / EAEC)</name>
    <dbReference type="NCBI Taxonomy" id="585055"/>
    <lineage>
        <taxon>Bacteria</taxon>
        <taxon>Pseudomonadati</taxon>
        <taxon>Pseudomonadota</taxon>
        <taxon>Gammaproteobacteria</taxon>
        <taxon>Enterobacterales</taxon>
        <taxon>Enterobacteriaceae</taxon>
        <taxon>Escherichia</taxon>
    </lineage>
</organism>
<reference key="1">
    <citation type="journal article" date="2009" name="PLoS Genet.">
        <title>Organised genome dynamics in the Escherichia coli species results in highly diverse adaptive paths.</title>
        <authorList>
            <person name="Touchon M."/>
            <person name="Hoede C."/>
            <person name="Tenaillon O."/>
            <person name="Barbe V."/>
            <person name="Baeriswyl S."/>
            <person name="Bidet P."/>
            <person name="Bingen E."/>
            <person name="Bonacorsi S."/>
            <person name="Bouchier C."/>
            <person name="Bouvet O."/>
            <person name="Calteau A."/>
            <person name="Chiapello H."/>
            <person name="Clermont O."/>
            <person name="Cruveiller S."/>
            <person name="Danchin A."/>
            <person name="Diard M."/>
            <person name="Dossat C."/>
            <person name="Karoui M.E."/>
            <person name="Frapy E."/>
            <person name="Garry L."/>
            <person name="Ghigo J.M."/>
            <person name="Gilles A.M."/>
            <person name="Johnson J."/>
            <person name="Le Bouguenec C."/>
            <person name="Lescat M."/>
            <person name="Mangenot S."/>
            <person name="Martinez-Jehanne V."/>
            <person name="Matic I."/>
            <person name="Nassif X."/>
            <person name="Oztas S."/>
            <person name="Petit M.A."/>
            <person name="Pichon C."/>
            <person name="Rouy Z."/>
            <person name="Ruf C.S."/>
            <person name="Schneider D."/>
            <person name="Tourret J."/>
            <person name="Vacherie B."/>
            <person name="Vallenet D."/>
            <person name="Medigue C."/>
            <person name="Rocha E.P.C."/>
            <person name="Denamur E."/>
        </authorList>
    </citation>
    <scope>NUCLEOTIDE SEQUENCE [LARGE SCALE GENOMIC DNA]</scope>
    <source>
        <strain>55989 / EAEC</strain>
    </source>
</reference>
<comment type="subcellular location">
    <subcellularLocation>
        <location evidence="1">Periplasm</location>
    </subcellularLocation>
</comment>
<comment type="similarity">
    <text evidence="1">Belongs to the UPF0194 family.</text>
</comment>
<gene>
    <name evidence="1" type="primary">ybhG</name>
    <name type="ordered locus">EC55989_0839</name>
</gene>
<proteinExistence type="inferred from homology"/>
<feature type="signal peptide" evidence="1">
    <location>
        <begin position="1"/>
        <end position="16"/>
    </location>
</feature>
<feature type="chain" id="PRO_1000165367" description="UPF0194 membrane protein YbhG">
    <location>
        <begin position="17"/>
        <end position="332"/>
    </location>
</feature>
<feature type="coiled-coil region" evidence="1">
    <location>
        <begin position="108"/>
        <end position="209"/>
    </location>
</feature>
<protein>
    <recommendedName>
        <fullName evidence="1">UPF0194 membrane protein YbhG</fullName>
    </recommendedName>
</protein>
<name>YBHG_ECO55</name>
<evidence type="ECO:0000255" key="1">
    <source>
        <dbReference type="HAMAP-Rule" id="MF_01304"/>
    </source>
</evidence>
<keyword id="KW-0175">Coiled coil</keyword>
<keyword id="KW-0574">Periplasm</keyword>
<keyword id="KW-1185">Reference proteome</keyword>
<keyword id="KW-0732">Signal</keyword>
<sequence>MMKKPVVIGLAVVVLAAVVAGGYWWYQSRQDNGLTLYGNVDIRTVNLSFRVGGRVESLAVDEGDAIKAGQVLGELDHKPYEIALMQAKAGVSVAQAQYDLMLAGYRDEEIAQAAAAVKQAQAAYDYAQNFYNRQQGLWKSRTISANDLENARSSRDQAQATLKSAQDKLRQYRSGNREQDIAQAKASLEQAQAQLAQAELNLQDSTLIAPSDGTLLTRAVEPGTVLNEGGTVFTVSLTRPVWVRAYVDERNLDQAQPGRKVLLYTDGRPDKPYHGQIGFVSPTAEFTPKTVETPDLRTDLVYRLRIVVTDADDALRQGMPVTVQFGNEAGHE</sequence>
<accession>B7LC78</accession>
<dbReference type="EMBL" id="CU928145">
    <property type="protein sequence ID" value="CAU96705.1"/>
    <property type="molecule type" value="Genomic_DNA"/>
</dbReference>
<dbReference type="SMR" id="B7LC78"/>
<dbReference type="KEGG" id="eck:EC55989_0839"/>
<dbReference type="HOGENOM" id="CLU_018816_6_3_6"/>
<dbReference type="Proteomes" id="UP000000746">
    <property type="component" value="Chromosome"/>
</dbReference>
<dbReference type="GO" id="GO:0042597">
    <property type="term" value="C:periplasmic space"/>
    <property type="evidence" value="ECO:0007669"/>
    <property type="project" value="UniProtKB-SubCell"/>
</dbReference>
<dbReference type="FunFam" id="1.10.287.470:FF:000004">
    <property type="entry name" value="UPF0194 membrane protein YbhG"/>
    <property type="match status" value="1"/>
</dbReference>
<dbReference type="FunFam" id="2.40.30.170:FF:000005">
    <property type="entry name" value="UPF0194 membrane protein YbhG"/>
    <property type="match status" value="1"/>
</dbReference>
<dbReference type="FunFam" id="2.40.50.100:FF:000025">
    <property type="entry name" value="UPF0194 membrane protein YbhG"/>
    <property type="match status" value="1"/>
</dbReference>
<dbReference type="Gene3D" id="2.40.30.170">
    <property type="match status" value="1"/>
</dbReference>
<dbReference type="Gene3D" id="2.40.50.100">
    <property type="match status" value="2"/>
</dbReference>
<dbReference type="Gene3D" id="1.10.287.470">
    <property type="entry name" value="Helix hairpin bin"/>
    <property type="match status" value="2"/>
</dbReference>
<dbReference type="HAMAP" id="MF_01304">
    <property type="entry name" value="UPF0194"/>
    <property type="match status" value="1"/>
</dbReference>
<dbReference type="InterPro" id="IPR032317">
    <property type="entry name" value="CusB_D23"/>
</dbReference>
<dbReference type="InterPro" id="IPR022936">
    <property type="entry name" value="UPF0194_membrane_YbhG"/>
</dbReference>
<dbReference type="InterPro" id="IPR050465">
    <property type="entry name" value="UPF0194_transport"/>
</dbReference>
<dbReference type="NCBIfam" id="NF002939">
    <property type="entry name" value="PRK03598.1"/>
    <property type="match status" value="1"/>
</dbReference>
<dbReference type="PANTHER" id="PTHR32347">
    <property type="entry name" value="EFFLUX SYSTEM COMPONENT YKNX-RELATED"/>
    <property type="match status" value="1"/>
</dbReference>
<dbReference type="PANTHER" id="PTHR32347:SF29">
    <property type="entry name" value="UPF0194 MEMBRANE PROTEIN YBHG"/>
    <property type="match status" value="1"/>
</dbReference>
<dbReference type="Pfam" id="PF16576">
    <property type="entry name" value="HlyD_D23"/>
    <property type="match status" value="1"/>
</dbReference>
<dbReference type="SUPFAM" id="SSF111369">
    <property type="entry name" value="HlyD-like secretion proteins"/>
    <property type="match status" value="2"/>
</dbReference>
<dbReference type="SUPFAM" id="SSF56954">
    <property type="entry name" value="Outer membrane efflux proteins (OEP)"/>
    <property type="match status" value="1"/>
</dbReference>